<comment type="function">
    <text evidence="1">Protein S19 forms a complex with S13 that binds strongly to the 16S ribosomal RNA.</text>
</comment>
<comment type="similarity">
    <text evidence="1">Belongs to the universal ribosomal protein uS19 family.</text>
</comment>
<sequence>MARSIKKGPFIDDHLMKKVLKSKETKDNKPIKTWSRRSTIVPDMIGLTLNVHNGRAFVPVYVTENHVGYKLGEFAPTRTFKGHKGSVQKKIGK</sequence>
<name>RS19_WOLSU</name>
<evidence type="ECO:0000255" key="1">
    <source>
        <dbReference type="HAMAP-Rule" id="MF_00531"/>
    </source>
</evidence>
<evidence type="ECO:0000305" key="2"/>
<feature type="chain" id="PRO_0000129941" description="Small ribosomal subunit protein uS19">
    <location>
        <begin position="1"/>
        <end position="93"/>
    </location>
</feature>
<keyword id="KW-1185">Reference proteome</keyword>
<keyword id="KW-0687">Ribonucleoprotein</keyword>
<keyword id="KW-0689">Ribosomal protein</keyword>
<keyword id="KW-0694">RNA-binding</keyword>
<keyword id="KW-0699">rRNA-binding</keyword>
<reference key="1">
    <citation type="journal article" date="2003" name="Proc. Natl. Acad. Sci. U.S.A.">
        <title>Complete genome sequence and analysis of Wolinella succinogenes.</title>
        <authorList>
            <person name="Baar C."/>
            <person name="Eppinger M."/>
            <person name="Raddatz G."/>
            <person name="Simon J."/>
            <person name="Lanz C."/>
            <person name="Klimmek O."/>
            <person name="Nandakumar R."/>
            <person name="Gross R."/>
            <person name="Rosinus A."/>
            <person name="Keller H."/>
            <person name="Jagtap P."/>
            <person name="Linke B."/>
            <person name="Meyer F."/>
            <person name="Lederer H."/>
            <person name="Schuster S.C."/>
        </authorList>
    </citation>
    <scope>NUCLEOTIDE SEQUENCE [LARGE SCALE GENOMIC DNA]</scope>
    <source>
        <strain>ATCC 29543 / DSM 1740 / CCUG 13145 / JCM 31913 / LMG 7466 / NCTC 11488 / FDC 602W</strain>
    </source>
</reference>
<protein>
    <recommendedName>
        <fullName evidence="1">Small ribosomal subunit protein uS19</fullName>
    </recommendedName>
    <alternativeName>
        <fullName evidence="2">30S ribosomal protein S19</fullName>
    </alternativeName>
</protein>
<accession>Q7M8D8</accession>
<gene>
    <name evidence="1" type="primary">rpsS</name>
    <name type="ordered locus">WS1712</name>
</gene>
<proteinExistence type="inferred from homology"/>
<dbReference type="EMBL" id="BX571661">
    <property type="protein sequence ID" value="CAE10738.1"/>
    <property type="molecule type" value="Genomic_DNA"/>
</dbReference>
<dbReference type="RefSeq" id="WP_011139522.1">
    <property type="nucleotide sequence ID" value="NC_005090.1"/>
</dbReference>
<dbReference type="SMR" id="Q7M8D8"/>
<dbReference type="STRING" id="273121.WS1712"/>
<dbReference type="KEGG" id="wsu:WS1712"/>
<dbReference type="eggNOG" id="COG0185">
    <property type="taxonomic scope" value="Bacteria"/>
</dbReference>
<dbReference type="HOGENOM" id="CLU_144911_0_1_7"/>
<dbReference type="Proteomes" id="UP000000422">
    <property type="component" value="Chromosome"/>
</dbReference>
<dbReference type="GO" id="GO:0005737">
    <property type="term" value="C:cytoplasm"/>
    <property type="evidence" value="ECO:0007669"/>
    <property type="project" value="UniProtKB-ARBA"/>
</dbReference>
<dbReference type="GO" id="GO:0015935">
    <property type="term" value="C:small ribosomal subunit"/>
    <property type="evidence" value="ECO:0007669"/>
    <property type="project" value="InterPro"/>
</dbReference>
<dbReference type="GO" id="GO:0019843">
    <property type="term" value="F:rRNA binding"/>
    <property type="evidence" value="ECO:0007669"/>
    <property type="project" value="UniProtKB-UniRule"/>
</dbReference>
<dbReference type="GO" id="GO:0003735">
    <property type="term" value="F:structural constituent of ribosome"/>
    <property type="evidence" value="ECO:0007669"/>
    <property type="project" value="InterPro"/>
</dbReference>
<dbReference type="GO" id="GO:0000028">
    <property type="term" value="P:ribosomal small subunit assembly"/>
    <property type="evidence" value="ECO:0007669"/>
    <property type="project" value="TreeGrafter"/>
</dbReference>
<dbReference type="GO" id="GO:0006412">
    <property type="term" value="P:translation"/>
    <property type="evidence" value="ECO:0007669"/>
    <property type="project" value="UniProtKB-UniRule"/>
</dbReference>
<dbReference type="FunFam" id="3.30.860.10:FF:000001">
    <property type="entry name" value="30S ribosomal protein S19"/>
    <property type="match status" value="1"/>
</dbReference>
<dbReference type="Gene3D" id="3.30.860.10">
    <property type="entry name" value="30s Ribosomal Protein S19, Chain A"/>
    <property type="match status" value="1"/>
</dbReference>
<dbReference type="HAMAP" id="MF_00531">
    <property type="entry name" value="Ribosomal_uS19"/>
    <property type="match status" value="1"/>
</dbReference>
<dbReference type="InterPro" id="IPR002222">
    <property type="entry name" value="Ribosomal_uS19"/>
</dbReference>
<dbReference type="InterPro" id="IPR005732">
    <property type="entry name" value="Ribosomal_uS19_bac-type"/>
</dbReference>
<dbReference type="InterPro" id="IPR020934">
    <property type="entry name" value="Ribosomal_uS19_CS"/>
</dbReference>
<dbReference type="InterPro" id="IPR023575">
    <property type="entry name" value="Ribosomal_uS19_SF"/>
</dbReference>
<dbReference type="NCBIfam" id="TIGR01050">
    <property type="entry name" value="rpsS_bact"/>
    <property type="match status" value="1"/>
</dbReference>
<dbReference type="PANTHER" id="PTHR11880">
    <property type="entry name" value="RIBOSOMAL PROTEIN S19P FAMILY MEMBER"/>
    <property type="match status" value="1"/>
</dbReference>
<dbReference type="PANTHER" id="PTHR11880:SF8">
    <property type="entry name" value="SMALL RIBOSOMAL SUBUNIT PROTEIN US19M"/>
    <property type="match status" value="1"/>
</dbReference>
<dbReference type="Pfam" id="PF00203">
    <property type="entry name" value="Ribosomal_S19"/>
    <property type="match status" value="1"/>
</dbReference>
<dbReference type="PIRSF" id="PIRSF002144">
    <property type="entry name" value="Ribosomal_S19"/>
    <property type="match status" value="1"/>
</dbReference>
<dbReference type="PRINTS" id="PR00975">
    <property type="entry name" value="RIBOSOMALS19"/>
</dbReference>
<dbReference type="SUPFAM" id="SSF54570">
    <property type="entry name" value="Ribosomal protein S19"/>
    <property type="match status" value="1"/>
</dbReference>
<dbReference type="PROSITE" id="PS00323">
    <property type="entry name" value="RIBOSOMAL_S19"/>
    <property type="match status" value="1"/>
</dbReference>
<organism>
    <name type="scientific">Wolinella succinogenes (strain ATCC 29543 / DSM 1740 / CCUG 13145 / JCM 31913 / LMG 7466 / NCTC 11488 / FDC 602W)</name>
    <name type="common">Vibrio succinogenes</name>
    <dbReference type="NCBI Taxonomy" id="273121"/>
    <lineage>
        <taxon>Bacteria</taxon>
        <taxon>Pseudomonadati</taxon>
        <taxon>Campylobacterota</taxon>
        <taxon>Epsilonproteobacteria</taxon>
        <taxon>Campylobacterales</taxon>
        <taxon>Helicobacteraceae</taxon>
        <taxon>Wolinella</taxon>
    </lineage>
</organism>